<organism>
    <name type="scientific">Salmonella paratyphi A (strain AKU_12601)</name>
    <dbReference type="NCBI Taxonomy" id="554290"/>
    <lineage>
        <taxon>Bacteria</taxon>
        <taxon>Pseudomonadati</taxon>
        <taxon>Pseudomonadota</taxon>
        <taxon>Gammaproteobacteria</taxon>
        <taxon>Enterobacterales</taxon>
        <taxon>Enterobacteriaceae</taxon>
        <taxon>Salmonella</taxon>
    </lineage>
</organism>
<sequence>MLIPSKLSRPVRLDHTVVRERLLAKLSGANNFRLALVTSPAGYGKTTLVSQWAAGKNELGWYSLDEGDNQQERFASYLIAAIQQATGGHCSTSEAMAQKRQYASLTSLFAQLFIELAQWHRPLYLVIDDYHLITNPVIHDAMRFFLRHQPENFTLVVLSRNLPQLGIANLRVRDQLLEIGSQQLAFNHQEAKQFFDRRLSSPIEAAESSRMCDDVAGWATALQLIALSARQNHTSAHHSARRLAGINASHLSDYLVDEVLDNVDVSTRHFLLKSAILRSMNDALIVRVTGEENGQMRLEEIERQGLFLQRMDDTGEWFSYHPLFGSFLRQRCQWELAAELPEIHRAAAESWMEQGFPSEAIHHALAAGDAQMLRDILLNHAWGLFNHSELALLEESLKALPWESLLENPRLVLLQAWLMQSQHRYSEVNTLLARAEQEIKGVMDGTLHAEFNALRAQVAINDGNPEEAERLAKLALDELPLAWFYSRIVATSVHGEVLHCKGDLSQSLSLMQQTEQMARHHDVWHYALWSLIQQSEIQFAQGFLQAAWETQERAFQLIKEQHLEQLPMHEFLVRIRAQLLWAWARLDEAEASARSGIAVLSTFQPQQQLQCLTLLVQCSLARGDLDNARSQLNRLENLLGNGRYHCDWISNADKVRVIYWQLTGDKKSAANWLRHTPKPAFANNHFLQGQWRNIARAQILLGEFEPAEIVLEELNENARSLRLMSDLNRNLLLLNQLYWQSGRKNDAQRVLLDALQLANRTGFISHFVIEGEAMAQQLRQLIQLNTLPEMEQHRAQRILREINQHHRHKFAHFDEGFVERLLNHPDVPELIRTSPLTQREWQVLGLIYSGYSNEQIAGELAVAATTIKTHIRNLYQKLGVAHRQDAVQHAQQLLKMMGYGV</sequence>
<keyword id="KW-0010">Activator</keyword>
<keyword id="KW-0067">ATP-binding</keyword>
<keyword id="KW-0119">Carbohydrate metabolism</keyword>
<keyword id="KW-0238">DNA-binding</keyword>
<keyword id="KW-0547">Nucleotide-binding</keyword>
<keyword id="KW-0804">Transcription</keyword>
<keyword id="KW-0805">Transcription regulation</keyword>
<name>MALT_SALPK</name>
<comment type="function">
    <text evidence="1">Positively regulates the transcription of the maltose regulon whose gene products are responsible for uptake and catabolism of malto-oligosaccharides. Specifically binds to the promoter region of its target genes, recognizing a short DNA motif called the MalT box.</text>
</comment>
<comment type="activity regulation">
    <text evidence="1">Activated by ATP and maltotriose, which are both required for DNA binding.</text>
</comment>
<comment type="subunit">
    <text evidence="1">Monomer in solution. Oligomerizes to an active state in the presence of the positive effectors ATP and maltotriose.</text>
</comment>
<comment type="similarity">
    <text evidence="1">Belongs to the MalT family.</text>
</comment>
<proteinExistence type="inferred from homology"/>
<reference key="1">
    <citation type="journal article" date="2009" name="BMC Genomics">
        <title>Pseudogene accumulation in the evolutionary histories of Salmonella enterica serovars Paratyphi A and Typhi.</title>
        <authorList>
            <person name="Holt K.E."/>
            <person name="Thomson N.R."/>
            <person name="Wain J."/>
            <person name="Langridge G.C."/>
            <person name="Hasan R."/>
            <person name="Bhutta Z.A."/>
            <person name="Quail M.A."/>
            <person name="Norbertczak H."/>
            <person name="Walker D."/>
            <person name="Simmonds M."/>
            <person name="White B."/>
            <person name="Bason N."/>
            <person name="Mungall K."/>
            <person name="Dougan G."/>
            <person name="Parkhill J."/>
        </authorList>
    </citation>
    <scope>NUCLEOTIDE SEQUENCE [LARGE SCALE GENOMIC DNA]</scope>
    <source>
        <strain>AKU_12601</strain>
    </source>
</reference>
<accession>B5BHH3</accession>
<feature type="chain" id="PRO_1000139859" description="HTH-type transcriptional regulator MalT">
    <location>
        <begin position="1"/>
        <end position="901"/>
    </location>
</feature>
<feature type="domain" description="HTH luxR-type" evidence="1">
    <location>
        <begin position="829"/>
        <end position="894"/>
    </location>
</feature>
<feature type="DNA-binding region" description="H-T-H motif" evidence="1">
    <location>
        <begin position="853"/>
        <end position="872"/>
    </location>
</feature>
<feature type="binding site" evidence="1">
    <location>
        <begin position="39"/>
        <end position="46"/>
    </location>
    <ligand>
        <name>ATP</name>
        <dbReference type="ChEBI" id="CHEBI:30616"/>
    </ligand>
</feature>
<protein>
    <recommendedName>
        <fullName evidence="1">HTH-type transcriptional regulator MalT</fullName>
    </recommendedName>
    <alternativeName>
        <fullName evidence="1">ATP-dependent transcriptional activator MalT</fullName>
    </alternativeName>
</protein>
<dbReference type="EMBL" id="FM200053">
    <property type="protein sequence ID" value="CAR61410.1"/>
    <property type="molecule type" value="Genomic_DNA"/>
</dbReference>
<dbReference type="RefSeq" id="WP_000907030.1">
    <property type="nucleotide sequence ID" value="NC_011147.1"/>
</dbReference>
<dbReference type="SMR" id="B5BHH3"/>
<dbReference type="KEGG" id="sek:SSPA3155"/>
<dbReference type="HOGENOM" id="CLU_006325_3_0_6"/>
<dbReference type="Proteomes" id="UP000001869">
    <property type="component" value="Chromosome"/>
</dbReference>
<dbReference type="GO" id="GO:0005524">
    <property type="term" value="F:ATP binding"/>
    <property type="evidence" value="ECO:0007669"/>
    <property type="project" value="UniProtKB-UniRule"/>
</dbReference>
<dbReference type="GO" id="GO:0003677">
    <property type="term" value="F:DNA binding"/>
    <property type="evidence" value="ECO:0007669"/>
    <property type="project" value="UniProtKB-KW"/>
</dbReference>
<dbReference type="GO" id="GO:0003700">
    <property type="term" value="F:DNA-binding transcription factor activity"/>
    <property type="evidence" value="ECO:0007669"/>
    <property type="project" value="UniProtKB-UniRule"/>
</dbReference>
<dbReference type="GO" id="GO:0045913">
    <property type="term" value="P:positive regulation of carbohydrate metabolic process"/>
    <property type="evidence" value="ECO:0007669"/>
    <property type="project" value="UniProtKB-UniRule"/>
</dbReference>
<dbReference type="GO" id="GO:0045893">
    <property type="term" value="P:positive regulation of DNA-templated transcription"/>
    <property type="evidence" value="ECO:0007669"/>
    <property type="project" value="UniProtKB-UniRule"/>
</dbReference>
<dbReference type="CDD" id="cd06170">
    <property type="entry name" value="LuxR_C_like"/>
    <property type="match status" value="1"/>
</dbReference>
<dbReference type="FunFam" id="1.10.10.10:FF:000115">
    <property type="entry name" value="HTH-type transcriptional regulator MalT"/>
    <property type="match status" value="1"/>
</dbReference>
<dbReference type="Gene3D" id="1.25.40.10">
    <property type="entry name" value="Tetratricopeptide repeat domain"/>
    <property type="match status" value="1"/>
</dbReference>
<dbReference type="Gene3D" id="1.10.10.10">
    <property type="entry name" value="Winged helix-like DNA-binding domain superfamily/Winged helix DNA-binding domain"/>
    <property type="match status" value="1"/>
</dbReference>
<dbReference type="HAMAP" id="MF_01247">
    <property type="entry name" value="HTH_type_MalT"/>
    <property type="match status" value="1"/>
</dbReference>
<dbReference type="InterPro" id="IPR027417">
    <property type="entry name" value="P-loop_NTPase"/>
</dbReference>
<dbReference type="InterPro" id="IPR016032">
    <property type="entry name" value="Sig_transdc_resp-reg_C-effctor"/>
</dbReference>
<dbReference type="InterPro" id="IPR011990">
    <property type="entry name" value="TPR-like_helical_dom_sf"/>
</dbReference>
<dbReference type="InterPro" id="IPR041617">
    <property type="entry name" value="TPR_MalT"/>
</dbReference>
<dbReference type="InterPro" id="IPR023768">
    <property type="entry name" value="Tscrpt_reg_HTH_MalT"/>
</dbReference>
<dbReference type="InterPro" id="IPR000792">
    <property type="entry name" value="Tscrpt_reg_LuxR_C"/>
</dbReference>
<dbReference type="InterPro" id="IPR036388">
    <property type="entry name" value="WH-like_DNA-bd_sf"/>
</dbReference>
<dbReference type="NCBIfam" id="NF003420">
    <property type="entry name" value="PRK04841.1"/>
    <property type="match status" value="1"/>
</dbReference>
<dbReference type="PANTHER" id="PTHR44688">
    <property type="entry name" value="DNA-BINDING TRANSCRIPTIONAL ACTIVATOR DEVR_DOSR"/>
    <property type="match status" value="1"/>
</dbReference>
<dbReference type="PANTHER" id="PTHR44688:SF16">
    <property type="entry name" value="DNA-BINDING TRANSCRIPTIONAL ACTIVATOR DEVR_DOSR"/>
    <property type="match status" value="1"/>
</dbReference>
<dbReference type="Pfam" id="PF00196">
    <property type="entry name" value="GerE"/>
    <property type="match status" value="1"/>
</dbReference>
<dbReference type="Pfam" id="PF17874">
    <property type="entry name" value="TPR_MalT"/>
    <property type="match status" value="1"/>
</dbReference>
<dbReference type="PRINTS" id="PR00038">
    <property type="entry name" value="HTHLUXR"/>
</dbReference>
<dbReference type="SMART" id="SM00421">
    <property type="entry name" value="HTH_LUXR"/>
    <property type="match status" value="1"/>
</dbReference>
<dbReference type="SUPFAM" id="SSF46894">
    <property type="entry name" value="C-terminal effector domain of the bipartite response regulators"/>
    <property type="match status" value="1"/>
</dbReference>
<dbReference type="SUPFAM" id="SSF52540">
    <property type="entry name" value="P-loop containing nucleoside triphosphate hydrolases"/>
    <property type="match status" value="1"/>
</dbReference>
<dbReference type="SUPFAM" id="SSF48452">
    <property type="entry name" value="TPR-like"/>
    <property type="match status" value="1"/>
</dbReference>
<dbReference type="PROSITE" id="PS00622">
    <property type="entry name" value="HTH_LUXR_1"/>
    <property type="match status" value="1"/>
</dbReference>
<dbReference type="PROSITE" id="PS50043">
    <property type="entry name" value="HTH_LUXR_2"/>
    <property type="match status" value="1"/>
</dbReference>
<gene>
    <name evidence="1" type="primary">malT</name>
    <name type="ordered locus">SSPA3155</name>
</gene>
<evidence type="ECO:0000255" key="1">
    <source>
        <dbReference type="HAMAP-Rule" id="MF_01247"/>
    </source>
</evidence>